<gene>
    <name type="primary">TPR</name>
</gene>
<reference key="1">
    <citation type="journal article" date="1992" name="Mol. Microbiol.">
        <title>Molecular characterization of the trypanothione reductase gene from Crithidia fasciculata and Trypanosoma brucei: comparison with other flavoprotein disulphide oxidoreductases with respect to substrate specificity and catalytic mechanism.</title>
        <authorList>
            <person name="Aboagye-Kwarteng T."/>
            <person name="Smith K."/>
            <person name="Fairlamb A.H."/>
        </authorList>
    </citation>
    <scope>NUCLEOTIDE SEQUENCE [GENOMIC DNA]</scope>
</reference>
<reference key="2">
    <citation type="journal article" date="1992" name="Mol. Biochem. Parasitol.">
        <title>Cloning, sequencing, and demonstration of polymorphism in trypanothione reductase from Crithidia fasciculata.</title>
        <authorList>
            <person name="Field H."/>
            <person name="Cerami A."/>
            <person name="Henderson G.B."/>
        </authorList>
    </citation>
    <scope>NUCLEOTIDE SEQUENCE [GENOMIC DNA / MRNA]</scope>
</reference>
<reference key="3">
    <citation type="journal article" date="1986" name="Biochemistry">
        <title>Purification and characterization of trypanothione reductase from Crithidia fasciculata, a newly discovered member of the family of disulfide-containing flavoprotein reductases.</title>
        <authorList>
            <person name="Shames S.L."/>
            <person name="Fairlamb A.H."/>
            <person name="Cerami A."/>
            <person name="Walsh C.T."/>
        </authorList>
    </citation>
    <scope>PROTEIN SEQUENCE OF 39-62</scope>
    <scope>CHARACTERIZATION</scope>
</reference>
<reference key="4">
    <citation type="journal article" date="1993" name="Eur. J. Biochem.">
        <title>Substrate interactions between trypanothione reductase and N1-glutathionylspermidine disulphide at 0.28-nm resolution.</title>
        <authorList>
            <person name="Bailey S."/>
            <person name="Smith K."/>
            <person name="Fairlamb A.H."/>
            <person name="Hunter W.N."/>
        </authorList>
    </citation>
    <scope>X-RAY CRYSTALLOGRAPHY (2.8 ANGSTROMS)</scope>
    <scope>DISULFIDE BOND</scope>
</reference>
<reference key="5">
    <citation type="journal article" date="1992" name="J. Mol. Biol.">
        <title>Active site of trypanothione reductase. A target for rational drug design.</title>
        <authorList>
            <person name="Hunter W.N."/>
            <person name="Bailey S."/>
            <person name="Habash J."/>
            <person name="Harrop S.J."/>
            <person name="Helliwell J.R."/>
            <person name="Aboagye-Kwarteng T."/>
            <person name="Smith K."/>
            <person name="Fairlamb A.H."/>
        </authorList>
    </citation>
    <scope>X-RAY CRYSTALLOGRAPHY (2.8 ANGSTROMS)</scope>
</reference>
<reference key="6">
    <citation type="journal article" date="1994" name="Acta Crystallogr. D">
        <title>Structure of trypanothione reductase from Crithidia fasciculata at 2.6-A resolution; enzyme-NADP interactions at 2.8-A resolution.</title>
        <authorList>
            <person name="Bailey S."/>
            <person name="Fairlamb A.H."/>
            <person name="Hunter W.N."/>
        </authorList>
    </citation>
    <scope>X-RAY CRYSTALLOGRAPHY (2.8 ANGSTROMS)</scope>
</reference>
<reference key="7">
    <citation type="journal article" date="1995" name="Acta Crystallogr. D">
        <title>Overexpression of Crithidia fasciculata trypanothione reductase and crystallization using a novel geometry.</title>
        <authorList>
            <person name="Strickland C.L."/>
            <person name="Puchalski R."/>
            <person name="Savvides S.N."/>
            <person name="Karplus P.A."/>
        </authorList>
    </citation>
    <scope>X-RAY CRYSTALLOGRAPHY (1.4 ANGSTROMS)</scope>
</reference>
<organism>
    <name type="scientific">Crithidia fasciculata</name>
    <dbReference type="NCBI Taxonomy" id="5656"/>
    <lineage>
        <taxon>Eukaryota</taxon>
        <taxon>Discoba</taxon>
        <taxon>Euglenozoa</taxon>
        <taxon>Kinetoplastea</taxon>
        <taxon>Metakinetoplastina</taxon>
        <taxon>Trypanosomatida</taxon>
        <taxon>Trypanosomatidae</taxon>
        <taxon>Leishmaniinae</taxon>
        <taxon>Crithidia</taxon>
    </lineage>
</organism>
<name>TYTR_CRIFA</name>
<feature type="chain" id="PRO_0000067988" description="Trypanothione reductase">
    <location>
        <begin position="1"/>
        <end position="491"/>
    </location>
</feature>
<feature type="active site" description="Proton acceptor">
    <location>
        <position position="461"/>
    </location>
</feature>
<feature type="binding site">
    <location>
        <begin position="35"/>
        <end position="51"/>
    </location>
    <ligand>
        <name>FAD</name>
        <dbReference type="ChEBI" id="CHEBI:57692"/>
    </ligand>
</feature>
<feature type="disulfide bond" description="Redox-active" evidence="1">
    <location>
        <begin position="52"/>
        <end position="57"/>
    </location>
</feature>
<feature type="sequence variant">
    <original>Q</original>
    <variation>E</variation>
    <location>
        <position position="479"/>
    </location>
</feature>
<feature type="sequence conflict" description="In Ref. 2; AAA30322/AAA30323." evidence="2" ref="2">
    <original>G</original>
    <variation>R</variation>
    <location>
        <position position="16"/>
    </location>
</feature>
<feature type="sequence conflict" description="In Ref. 3; AA sequence." evidence="2" ref="3">
    <original>L</original>
    <variation>Y</variation>
    <location>
        <position position="62"/>
    </location>
</feature>
<feature type="sequence conflict" description="In Ref. 2; AAA30321/AAA30322/AAA30323." evidence="2" ref="2">
    <original>D</original>
    <variation>E</variation>
    <location>
        <position position="297"/>
    </location>
</feature>
<feature type="sequence conflict" description="In Ref. 2; AAA30322/AAA30323." evidence="2" ref="2">
    <original>F</original>
    <variation>V</variation>
    <location>
        <position position="454"/>
    </location>
</feature>
<feature type="strand" evidence="4">
    <location>
        <begin position="4"/>
        <end position="10"/>
    </location>
</feature>
<feature type="helix" evidence="4">
    <location>
        <begin position="14"/>
        <end position="27"/>
    </location>
</feature>
<feature type="strand" evidence="4">
    <location>
        <begin position="31"/>
        <end position="36"/>
    </location>
</feature>
<feature type="strand" evidence="4">
    <location>
        <begin position="38"/>
        <end position="41"/>
    </location>
</feature>
<feature type="turn" evidence="4">
    <location>
        <begin position="42"/>
        <end position="44"/>
    </location>
</feature>
<feature type="helix" evidence="4">
    <location>
        <begin position="51"/>
        <end position="55"/>
    </location>
</feature>
<feature type="helix" evidence="4">
    <location>
        <begin position="57"/>
        <end position="75"/>
    </location>
</feature>
<feature type="helix" evidence="4">
    <location>
        <begin position="76"/>
        <end position="79"/>
    </location>
</feature>
<feature type="helix" evidence="4">
    <location>
        <begin position="85"/>
        <end position="87"/>
    </location>
</feature>
<feature type="helix" evidence="4">
    <location>
        <begin position="92"/>
        <end position="115"/>
    </location>
</feature>
<feature type="strand" evidence="4">
    <location>
        <begin position="120"/>
        <end position="131"/>
    </location>
</feature>
<feature type="strand" evidence="4">
    <location>
        <begin position="134"/>
        <end position="142"/>
    </location>
</feature>
<feature type="strand" evidence="4">
    <location>
        <begin position="147"/>
        <end position="158"/>
    </location>
</feature>
<feature type="strand" evidence="4">
    <location>
        <begin position="162"/>
        <end position="164"/>
    </location>
</feature>
<feature type="helix" evidence="4">
    <location>
        <begin position="172"/>
        <end position="174"/>
    </location>
</feature>
<feature type="helix" evidence="4">
    <location>
        <begin position="178"/>
        <end position="181"/>
    </location>
</feature>
<feature type="strand" evidence="4">
    <location>
        <begin position="189"/>
        <end position="194"/>
    </location>
</feature>
<feature type="helix" evidence="4">
    <location>
        <begin position="198"/>
        <end position="210"/>
    </location>
</feature>
<feature type="strand" evidence="4">
    <location>
        <begin position="216"/>
        <end position="227"/>
    </location>
</feature>
<feature type="helix" evidence="4">
    <location>
        <begin position="232"/>
        <end position="244"/>
    </location>
</feature>
<feature type="strand" evidence="4">
    <location>
        <begin position="247"/>
        <end position="251"/>
    </location>
</feature>
<feature type="strand" evidence="4">
    <location>
        <begin position="255"/>
        <end position="260"/>
    </location>
</feature>
<feature type="strand" evidence="4">
    <location>
        <begin position="266"/>
        <end position="270"/>
    </location>
</feature>
<feature type="strand" evidence="4">
    <location>
        <begin position="275"/>
        <end position="283"/>
    </location>
</feature>
<feature type="strand" evidence="4">
    <location>
        <begin position="287"/>
        <end position="290"/>
    </location>
</feature>
<feature type="helix" evidence="3">
    <location>
        <begin position="292"/>
        <end position="294"/>
    </location>
</feature>
<feature type="helix" evidence="4">
    <location>
        <begin position="296"/>
        <end position="299"/>
    </location>
</feature>
<feature type="strand" evidence="4">
    <location>
        <begin position="322"/>
        <end position="324"/>
    </location>
</feature>
<feature type="helix" evidence="4">
    <location>
        <begin position="326"/>
        <end position="329"/>
    </location>
</feature>
<feature type="helix" evidence="4">
    <location>
        <begin position="335"/>
        <end position="350"/>
    </location>
</feature>
<feature type="strand" evidence="4">
    <location>
        <begin position="364"/>
        <end position="366"/>
    </location>
</feature>
<feature type="strand" evidence="5">
    <location>
        <begin position="368"/>
        <end position="370"/>
    </location>
</feature>
<feature type="strand" evidence="4">
    <location>
        <begin position="372"/>
        <end position="376"/>
    </location>
</feature>
<feature type="helix" evidence="4">
    <location>
        <begin position="379"/>
        <end position="385"/>
    </location>
</feature>
<feature type="strand" evidence="4">
    <location>
        <begin position="387"/>
        <end position="396"/>
    </location>
</feature>
<feature type="helix" evidence="4">
    <location>
        <begin position="399"/>
        <end position="404"/>
    </location>
</feature>
<feature type="strand" evidence="4">
    <location>
        <begin position="411"/>
        <end position="418"/>
    </location>
</feature>
<feature type="turn" evidence="4">
    <location>
        <begin position="419"/>
        <end position="421"/>
    </location>
</feature>
<feature type="strand" evidence="4">
    <location>
        <begin position="423"/>
        <end position="431"/>
    </location>
</feature>
<feature type="helix" evidence="4">
    <location>
        <begin position="434"/>
        <end position="446"/>
    </location>
</feature>
<feature type="helix" evidence="4">
    <location>
        <begin position="451"/>
        <end position="455"/>
    </location>
</feature>
<feature type="helix" evidence="4">
    <location>
        <begin position="465"/>
        <end position="469"/>
    </location>
</feature>
<feature type="strand" evidence="4">
    <location>
        <begin position="475"/>
        <end position="479"/>
    </location>
</feature>
<feature type="strand" evidence="4">
    <location>
        <begin position="482"/>
        <end position="484"/>
    </location>
</feature>
<proteinExistence type="evidence at protein level"/>
<protein>
    <recommendedName>
        <fullName>Trypanothione reductase</fullName>
        <shortName>TR</shortName>
        <ecNumber>1.8.1.12</ecNumber>
    </recommendedName>
    <alternativeName>
        <fullName>N(1),N(8)-bis(glutathionyl)spermidine reductase</fullName>
    </alternativeName>
</protein>
<comment type="function">
    <text>Trypanothione is the parasite analog of glutathione; this enzyme is the equivalent of glutathione reductase.</text>
</comment>
<comment type="catalytic activity">
    <reaction>
        <text>trypanothione + NADP(+) = trypanothione disulfide + NADPH + H(+)</text>
        <dbReference type="Rhea" id="RHEA:16757"/>
        <dbReference type="ChEBI" id="CHEBI:15378"/>
        <dbReference type="ChEBI" id="CHEBI:57783"/>
        <dbReference type="ChEBI" id="CHEBI:58290"/>
        <dbReference type="ChEBI" id="CHEBI:58349"/>
        <dbReference type="ChEBI" id="CHEBI:58661"/>
        <dbReference type="EC" id="1.8.1.12"/>
    </reaction>
</comment>
<comment type="cofactor">
    <cofactor>
        <name>FAD</name>
        <dbReference type="ChEBI" id="CHEBI:57692"/>
    </cofactor>
    <text>Binds 1 FAD per subunit.</text>
</comment>
<comment type="biophysicochemical properties">
    <phDependence>
        <text>Optimum pH is 7.5-8.0.</text>
    </phDependence>
</comment>
<comment type="subunit">
    <text>Homodimer.</text>
</comment>
<comment type="subcellular location">
    <subcellularLocation>
        <location>Cytoplasm</location>
    </subcellularLocation>
</comment>
<comment type="PTM">
    <text>The N-terminus is blocked.</text>
</comment>
<comment type="miscellaneous">
    <text>The active site is a redox-active disulfide bond.</text>
</comment>
<comment type="similarity">
    <text evidence="2">Belongs to the class-I pyridine nucleotide-disulfide oxidoreductase family.</text>
</comment>
<dbReference type="EC" id="1.8.1.12"/>
<dbReference type="EMBL" id="Z12618">
    <property type="protein sequence ID" value="CAA78264.1"/>
    <property type="molecule type" value="Genomic_DNA"/>
</dbReference>
<dbReference type="EMBL" id="M73323">
    <property type="protein sequence ID" value="AAA30321.1"/>
    <property type="molecule type" value="mRNA"/>
</dbReference>
<dbReference type="EMBL" id="M73324">
    <property type="protein sequence ID" value="AAA30322.1"/>
    <property type="molecule type" value="Genomic_DNA"/>
</dbReference>
<dbReference type="EMBL" id="M73325">
    <property type="protein sequence ID" value="AAA30323.1"/>
    <property type="molecule type" value="Genomic_DNA"/>
</dbReference>
<dbReference type="PIR" id="S28002">
    <property type="entry name" value="S28002"/>
</dbReference>
<dbReference type="PDB" id="1FEA">
    <property type="method" value="X-ray"/>
    <property type="resolution" value="2.20 A"/>
    <property type="chains" value="A/B/C/D=2-491"/>
</dbReference>
<dbReference type="PDB" id="1FEB">
    <property type="method" value="X-ray"/>
    <property type="resolution" value="2.00 A"/>
    <property type="chains" value="A/B=2-491"/>
</dbReference>
<dbReference type="PDB" id="1FEC">
    <property type="method" value="X-ray"/>
    <property type="resolution" value="1.70 A"/>
    <property type="chains" value="A/B=2-491"/>
</dbReference>
<dbReference type="PDB" id="1TYP">
    <property type="method" value="X-ray"/>
    <property type="resolution" value="2.80 A"/>
    <property type="chains" value="A/B=1-487"/>
</dbReference>
<dbReference type="PDB" id="1TYT">
    <property type="method" value="X-ray"/>
    <property type="resolution" value="2.60 A"/>
    <property type="chains" value="A/B=1-487"/>
</dbReference>
<dbReference type="PDB" id="2TPR">
    <property type="method" value="X-ray"/>
    <property type="resolution" value="2.40 A"/>
    <property type="chains" value="A/B=2-491"/>
</dbReference>
<dbReference type="PDBsum" id="1FEA"/>
<dbReference type="PDBsum" id="1FEB"/>
<dbReference type="PDBsum" id="1FEC"/>
<dbReference type="PDBsum" id="1TYP"/>
<dbReference type="PDBsum" id="1TYT"/>
<dbReference type="PDBsum" id="2TPR"/>
<dbReference type="SMR" id="P39040"/>
<dbReference type="BindingDB" id="P39040"/>
<dbReference type="ChEMBL" id="CHEMBL5394"/>
<dbReference type="KEGG" id="ag:CAA78264"/>
<dbReference type="VEuPathDB" id="TriTrypDB:CFAC1_020010000"/>
<dbReference type="BioCyc" id="MetaCyc:MONOMER-13293"/>
<dbReference type="EvolutionaryTrace" id="P39040"/>
<dbReference type="GO" id="GO:0005829">
    <property type="term" value="C:cytosol"/>
    <property type="evidence" value="ECO:0007669"/>
    <property type="project" value="TreeGrafter"/>
</dbReference>
<dbReference type="GO" id="GO:0005739">
    <property type="term" value="C:mitochondrion"/>
    <property type="evidence" value="ECO:0007669"/>
    <property type="project" value="TreeGrafter"/>
</dbReference>
<dbReference type="GO" id="GO:0050660">
    <property type="term" value="F:flavin adenine dinucleotide binding"/>
    <property type="evidence" value="ECO:0007669"/>
    <property type="project" value="InterPro"/>
</dbReference>
<dbReference type="GO" id="GO:0004362">
    <property type="term" value="F:glutathione-disulfide reductase (NADPH) activity"/>
    <property type="evidence" value="ECO:0007669"/>
    <property type="project" value="TreeGrafter"/>
</dbReference>
<dbReference type="GO" id="GO:0015042">
    <property type="term" value="F:trypanothione-disulfide reductase (NADPH) activity"/>
    <property type="evidence" value="ECO:0007669"/>
    <property type="project" value="UniProtKB-EC"/>
</dbReference>
<dbReference type="GO" id="GO:0045454">
    <property type="term" value="P:cell redox homeostasis"/>
    <property type="evidence" value="ECO:0007669"/>
    <property type="project" value="InterPro"/>
</dbReference>
<dbReference type="GO" id="GO:0034599">
    <property type="term" value="P:cellular response to oxidative stress"/>
    <property type="evidence" value="ECO:0007669"/>
    <property type="project" value="TreeGrafter"/>
</dbReference>
<dbReference type="GO" id="GO:0006749">
    <property type="term" value="P:glutathione metabolic process"/>
    <property type="evidence" value="ECO:0007669"/>
    <property type="project" value="TreeGrafter"/>
</dbReference>
<dbReference type="FunFam" id="3.50.50.60:FF:000051">
    <property type="entry name" value="Glutathione reductase"/>
    <property type="match status" value="1"/>
</dbReference>
<dbReference type="FunFam" id="3.50.50.60:FF:000233">
    <property type="entry name" value="Trypanothione reductase"/>
    <property type="match status" value="1"/>
</dbReference>
<dbReference type="Gene3D" id="3.30.390.30">
    <property type="match status" value="1"/>
</dbReference>
<dbReference type="Gene3D" id="3.50.50.60">
    <property type="entry name" value="FAD/NAD(P)-binding domain"/>
    <property type="match status" value="2"/>
</dbReference>
<dbReference type="InterPro" id="IPR036188">
    <property type="entry name" value="FAD/NAD-bd_sf"/>
</dbReference>
<dbReference type="InterPro" id="IPR023753">
    <property type="entry name" value="FAD/NAD-binding_dom"/>
</dbReference>
<dbReference type="InterPro" id="IPR016156">
    <property type="entry name" value="FAD/NAD-linked_Rdtase_dimer_sf"/>
</dbReference>
<dbReference type="InterPro" id="IPR046952">
    <property type="entry name" value="GSHR/TRXR-like"/>
</dbReference>
<dbReference type="InterPro" id="IPR001100">
    <property type="entry name" value="Pyr_nuc-diS_OxRdtase"/>
</dbReference>
<dbReference type="InterPro" id="IPR004099">
    <property type="entry name" value="Pyr_nucl-diS_OxRdtase_dimer"/>
</dbReference>
<dbReference type="InterPro" id="IPR012999">
    <property type="entry name" value="Pyr_OxRdtase_I_AS"/>
</dbReference>
<dbReference type="InterPro" id="IPR001864">
    <property type="entry name" value="Trypnth_redctse"/>
</dbReference>
<dbReference type="NCBIfam" id="TIGR01423">
    <property type="entry name" value="trypano_reduc"/>
    <property type="match status" value="1"/>
</dbReference>
<dbReference type="PANTHER" id="PTHR42737">
    <property type="entry name" value="GLUTATHIONE REDUCTASE"/>
    <property type="match status" value="1"/>
</dbReference>
<dbReference type="PANTHER" id="PTHR42737:SF2">
    <property type="entry name" value="GLUTATHIONE REDUCTASE"/>
    <property type="match status" value="1"/>
</dbReference>
<dbReference type="Pfam" id="PF07992">
    <property type="entry name" value="Pyr_redox_2"/>
    <property type="match status" value="1"/>
</dbReference>
<dbReference type="Pfam" id="PF02852">
    <property type="entry name" value="Pyr_redox_dim"/>
    <property type="match status" value="1"/>
</dbReference>
<dbReference type="PIRSF" id="PIRSF000350">
    <property type="entry name" value="Mercury_reductase_MerA"/>
    <property type="match status" value="1"/>
</dbReference>
<dbReference type="PRINTS" id="PR00368">
    <property type="entry name" value="FADPNR"/>
</dbReference>
<dbReference type="PRINTS" id="PR00411">
    <property type="entry name" value="PNDRDTASEI"/>
</dbReference>
<dbReference type="PRINTS" id="PR00470">
    <property type="entry name" value="TRYPANRDTASE"/>
</dbReference>
<dbReference type="SUPFAM" id="SSF51905">
    <property type="entry name" value="FAD/NAD(P)-binding domain"/>
    <property type="match status" value="1"/>
</dbReference>
<dbReference type="SUPFAM" id="SSF55424">
    <property type="entry name" value="FAD/NAD-linked reductases, dimerisation (C-terminal) domain"/>
    <property type="match status" value="1"/>
</dbReference>
<dbReference type="SUPFAM" id="SSF51971">
    <property type="entry name" value="Nucleotide-binding domain"/>
    <property type="match status" value="1"/>
</dbReference>
<dbReference type="PROSITE" id="PS00076">
    <property type="entry name" value="PYRIDINE_REDOX_1"/>
    <property type="match status" value="1"/>
</dbReference>
<accession>P39040</accession>
<evidence type="ECO:0000269" key="1">
    <source>
    </source>
</evidence>
<evidence type="ECO:0000305" key="2"/>
<evidence type="ECO:0007829" key="3">
    <source>
        <dbReference type="PDB" id="1FEA"/>
    </source>
</evidence>
<evidence type="ECO:0007829" key="4">
    <source>
        <dbReference type="PDB" id="1FEC"/>
    </source>
</evidence>
<evidence type="ECO:0007829" key="5">
    <source>
        <dbReference type="PDB" id="1TYT"/>
    </source>
</evidence>
<sequence>MSRAYDLVVIGAGSGGLEAGWNAASLHKKRVAVIDLQKHHGPPHYAALGGTCVNVGCVPKKLMVTGANYMDTIRESAGFGWELDRESVRPNWKALIAAKNKAVSGINDSYEGMFADTEGLTFHQGFGALQDNHTVLVRESADPNSAVLETLDTEYILLATGSWPQHLGIEGDDLCITSNEAFYLDEAPKRALCVGGGYISIEFAGIFNAYKARGGQVDLAYRGDMILRGFDSELRKQLTEQLRANGINVRTHENPAKVTKNADGTRHVVFESGAEADYDVVMLAIGRVPRSQTLQLDKAGVEVAKNGAIKVDAYSKTNVDNIYAIGDVTDRVMLTPVAINEGAAFVDTVFANKPRATDHTKVACAVFSIPPMGVCGYVEEDAAKKYDQVAVYESSFTPLMHNISGSTYKKFMVRIVTNHADGEVLGVHMLGDSSPEIIQSVAICLKMGAKISDFYNTIGVHPTSAEELCSMRTPAYFYQKGKRVEKIDSNL</sequence>
<keyword id="KW-0002">3D-structure</keyword>
<keyword id="KW-0963">Cytoplasm</keyword>
<keyword id="KW-0903">Direct protein sequencing</keyword>
<keyword id="KW-1015">Disulfide bond</keyword>
<keyword id="KW-0274">FAD</keyword>
<keyword id="KW-0285">Flavoprotein</keyword>
<keyword id="KW-0521">NADP</keyword>
<keyword id="KW-0560">Oxidoreductase</keyword>
<keyword id="KW-0676">Redox-active center</keyword>